<name>MURD_LACLA</name>
<proteinExistence type="inferred from homology"/>
<organism>
    <name type="scientific">Lactococcus lactis subsp. lactis (strain IL1403)</name>
    <name type="common">Streptococcus lactis</name>
    <dbReference type="NCBI Taxonomy" id="272623"/>
    <lineage>
        <taxon>Bacteria</taxon>
        <taxon>Bacillati</taxon>
        <taxon>Bacillota</taxon>
        <taxon>Bacilli</taxon>
        <taxon>Lactobacillales</taxon>
        <taxon>Streptococcaceae</taxon>
        <taxon>Lactococcus</taxon>
    </lineage>
</organism>
<keyword id="KW-0067">ATP-binding</keyword>
<keyword id="KW-0131">Cell cycle</keyword>
<keyword id="KW-0132">Cell division</keyword>
<keyword id="KW-0133">Cell shape</keyword>
<keyword id="KW-0961">Cell wall biogenesis/degradation</keyword>
<keyword id="KW-0963">Cytoplasm</keyword>
<keyword id="KW-0436">Ligase</keyword>
<keyword id="KW-0547">Nucleotide-binding</keyword>
<keyword id="KW-0573">Peptidoglycan synthesis</keyword>
<keyword id="KW-1185">Reference proteome</keyword>
<accession>Q9CF91</accession>
<evidence type="ECO:0000255" key="1">
    <source>
        <dbReference type="HAMAP-Rule" id="MF_00639"/>
    </source>
</evidence>
<gene>
    <name evidence="1" type="primary">murD</name>
    <name type="ordered locus">LL1590</name>
    <name type="ORF">L0237</name>
</gene>
<reference key="1">
    <citation type="journal article" date="2001" name="Genome Res.">
        <title>The complete genome sequence of the lactic acid bacterium Lactococcus lactis ssp. lactis IL1403.</title>
        <authorList>
            <person name="Bolotin A."/>
            <person name="Wincker P."/>
            <person name="Mauger S."/>
            <person name="Jaillon O."/>
            <person name="Malarme K."/>
            <person name="Weissenbach J."/>
            <person name="Ehrlich S.D."/>
            <person name="Sorokin A."/>
        </authorList>
    </citation>
    <scope>NUCLEOTIDE SEQUENCE [LARGE SCALE GENOMIC DNA]</scope>
    <source>
        <strain>IL1403</strain>
    </source>
</reference>
<feature type="chain" id="PRO_0000109031" description="UDP-N-acetylmuramoylalanine--D-glutamate ligase">
    <location>
        <begin position="1"/>
        <end position="450"/>
    </location>
</feature>
<feature type="binding site" evidence="1">
    <location>
        <begin position="119"/>
        <end position="125"/>
    </location>
    <ligand>
        <name>ATP</name>
        <dbReference type="ChEBI" id="CHEBI:30616"/>
    </ligand>
</feature>
<protein>
    <recommendedName>
        <fullName evidence="1">UDP-N-acetylmuramoylalanine--D-glutamate ligase</fullName>
        <ecNumber evidence="1">6.3.2.9</ecNumber>
    </recommendedName>
    <alternativeName>
        <fullName evidence="1">D-glutamic acid-adding enzyme</fullName>
    </alternativeName>
    <alternativeName>
        <fullName evidence="1">UDP-N-acetylmuramoyl-L-alanyl-D-glutamate synthetase</fullName>
    </alternativeName>
</protein>
<sequence length="450" mass="49362">MKKITKFKDQKILVLGLARSGMAAALVLNELGAIVTVNDGKPFEENKEAQLLLEEGIKVITGSHPIDLLDEDFALMVKNPGIRYDNPMVERAEALNIPVITEVELAYLISEAPIIGITGTNGKTTTTTLIADILNADGQSAKLSGNIGFPASEVAEKASASDTLVMELSSFQLMGIDSFRPKIALITNLFSAHLDYHGSQKAYEAAKWRIQENMTSDDFLILNFNQEKCRNLADKTKATVLAFSTKEKVNGAYSKDGKIYFNDEYIMEVSELSLPGEHNLENALAAIVASKLQGTKNEAIVEVLTSFAGVKHRLQYLGEIDGRKVYNDSKATNILATQKALSGFDNSKLWLLAGGLDRGNGFEELEKDLQDLKGMVVFGQTANKLRLTAEKLNIPVFDSENVAKALEEILPQTQAGDTILLSPACASWDQYKTFEERGDLFIQAFENLKK</sequence>
<comment type="function">
    <text evidence="1">Cell wall formation. Catalyzes the addition of glutamate to the nucleotide precursor UDP-N-acetylmuramoyl-L-alanine (UMA).</text>
</comment>
<comment type="catalytic activity">
    <reaction evidence="1">
        <text>UDP-N-acetyl-alpha-D-muramoyl-L-alanine + D-glutamate + ATP = UDP-N-acetyl-alpha-D-muramoyl-L-alanyl-D-glutamate + ADP + phosphate + H(+)</text>
        <dbReference type="Rhea" id="RHEA:16429"/>
        <dbReference type="ChEBI" id="CHEBI:15378"/>
        <dbReference type="ChEBI" id="CHEBI:29986"/>
        <dbReference type="ChEBI" id="CHEBI:30616"/>
        <dbReference type="ChEBI" id="CHEBI:43474"/>
        <dbReference type="ChEBI" id="CHEBI:83898"/>
        <dbReference type="ChEBI" id="CHEBI:83900"/>
        <dbReference type="ChEBI" id="CHEBI:456216"/>
        <dbReference type="EC" id="6.3.2.9"/>
    </reaction>
</comment>
<comment type="pathway">
    <text evidence="1">Cell wall biogenesis; peptidoglycan biosynthesis.</text>
</comment>
<comment type="subcellular location">
    <subcellularLocation>
        <location evidence="1">Cytoplasm</location>
    </subcellularLocation>
</comment>
<comment type="similarity">
    <text evidence="1">Belongs to the MurCDEF family.</text>
</comment>
<dbReference type="EC" id="6.3.2.9" evidence="1"/>
<dbReference type="EMBL" id="AE005176">
    <property type="protein sequence ID" value="AAK05688.1"/>
    <property type="molecule type" value="Genomic_DNA"/>
</dbReference>
<dbReference type="PIR" id="F86823">
    <property type="entry name" value="F86823"/>
</dbReference>
<dbReference type="RefSeq" id="NP_267746.1">
    <property type="nucleotide sequence ID" value="NC_002662.1"/>
</dbReference>
<dbReference type="RefSeq" id="WP_003130748.1">
    <property type="nucleotide sequence ID" value="NC_002662.1"/>
</dbReference>
<dbReference type="SMR" id="Q9CF91"/>
<dbReference type="PaxDb" id="272623-L0237"/>
<dbReference type="EnsemblBacteria" id="AAK05688">
    <property type="protein sequence ID" value="AAK05688"/>
    <property type="gene ID" value="L0237"/>
</dbReference>
<dbReference type="GeneID" id="89633786"/>
<dbReference type="KEGG" id="lla:L0237"/>
<dbReference type="PATRIC" id="fig|272623.7.peg.1710"/>
<dbReference type="eggNOG" id="COG0771">
    <property type="taxonomic scope" value="Bacteria"/>
</dbReference>
<dbReference type="HOGENOM" id="CLU_032540_0_1_9"/>
<dbReference type="OrthoDB" id="9809796at2"/>
<dbReference type="UniPathway" id="UPA00219"/>
<dbReference type="Proteomes" id="UP000002196">
    <property type="component" value="Chromosome"/>
</dbReference>
<dbReference type="GO" id="GO:0005737">
    <property type="term" value="C:cytoplasm"/>
    <property type="evidence" value="ECO:0007669"/>
    <property type="project" value="UniProtKB-SubCell"/>
</dbReference>
<dbReference type="GO" id="GO:0005524">
    <property type="term" value="F:ATP binding"/>
    <property type="evidence" value="ECO:0007669"/>
    <property type="project" value="UniProtKB-UniRule"/>
</dbReference>
<dbReference type="GO" id="GO:0008764">
    <property type="term" value="F:UDP-N-acetylmuramoylalanine-D-glutamate ligase activity"/>
    <property type="evidence" value="ECO:0007669"/>
    <property type="project" value="UniProtKB-UniRule"/>
</dbReference>
<dbReference type="GO" id="GO:0051301">
    <property type="term" value="P:cell division"/>
    <property type="evidence" value="ECO:0007669"/>
    <property type="project" value="UniProtKB-KW"/>
</dbReference>
<dbReference type="GO" id="GO:0071555">
    <property type="term" value="P:cell wall organization"/>
    <property type="evidence" value="ECO:0007669"/>
    <property type="project" value="UniProtKB-KW"/>
</dbReference>
<dbReference type="GO" id="GO:0009252">
    <property type="term" value="P:peptidoglycan biosynthetic process"/>
    <property type="evidence" value="ECO:0007669"/>
    <property type="project" value="UniProtKB-UniRule"/>
</dbReference>
<dbReference type="GO" id="GO:0008360">
    <property type="term" value="P:regulation of cell shape"/>
    <property type="evidence" value="ECO:0007669"/>
    <property type="project" value="UniProtKB-KW"/>
</dbReference>
<dbReference type="Gene3D" id="3.90.190.20">
    <property type="entry name" value="Mur ligase, C-terminal domain"/>
    <property type="match status" value="1"/>
</dbReference>
<dbReference type="Gene3D" id="3.40.1190.10">
    <property type="entry name" value="Mur-like, catalytic domain"/>
    <property type="match status" value="1"/>
</dbReference>
<dbReference type="Gene3D" id="3.40.50.720">
    <property type="entry name" value="NAD(P)-binding Rossmann-like Domain"/>
    <property type="match status" value="1"/>
</dbReference>
<dbReference type="HAMAP" id="MF_00639">
    <property type="entry name" value="MurD"/>
    <property type="match status" value="1"/>
</dbReference>
<dbReference type="InterPro" id="IPR036565">
    <property type="entry name" value="Mur-like_cat_sf"/>
</dbReference>
<dbReference type="InterPro" id="IPR004101">
    <property type="entry name" value="Mur_ligase_C"/>
</dbReference>
<dbReference type="InterPro" id="IPR036615">
    <property type="entry name" value="Mur_ligase_C_dom_sf"/>
</dbReference>
<dbReference type="InterPro" id="IPR013221">
    <property type="entry name" value="Mur_ligase_cen"/>
</dbReference>
<dbReference type="InterPro" id="IPR005762">
    <property type="entry name" value="MurD"/>
</dbReference>
<dbReference type="NCBIfam" id="TIGR01087">
    <property type="entry name" value="murD"/>
    <property type="match status" value="1"/>
</dbReference>
<dbReference type="PANTHER" id="PTHR43692">
    <property type="entry name" value="UDP-N-ACETYLMURAMOYLALANINE--D-GLUTAMATE LIGASE"/>
    <property type="match status" value="1"/>
</dbReference>
<dbReference type="PANTHER" id="PTHR43692:SF1">
    <property type="entry name" value="UDP-N-ACETYLMURAMOYLALANINE--D-GLUTAMATE LIGASE"/>
    <property type="match status" value="1"/>
</dbReference>
<dbReference type="Pfam" id="PF02875">
    <property type="entry name" value="Mur_ligase_C"/>
    <property type="match status" value="1"/>
</dbReference>
<dbReference type="Pfam" id="PF08245">
    <property type="entry name" value="Mur_ligase_M"/>
    <property type="match status" value="1"/>
</dbReference>
<dbReference type="Pfam" id="PF21799">
    <property type="entry name" value="MurD-like_N"/>
    <property type="match status" value="1"/>
</dbReference>
<dbReference type="SUPFAM" id="SSF51984">
    <property type="entry name" value="MurCD N-terminal domain"/>
    <property type="match status" value="1"/>
</dbReference>
<dbReference type="SUPFAM" id="SSF53623">
    <property type="entry name" value="MurD-like peptide ligases, catalytic domain"/>
    <property type="match status" value="1"/>
</dbReference>
<dbReference type="SUPFAM" id="SSF53244">
    <property type="entry name" value="MurD-like peptide ligases, peptide-binding domain"/>
    <property type="match status" value="1"/>
</dbReference>